<keyword id="KW-0007">Acetylation</keyword>
<keyword id="KW-0966">Cell projection</keyword>
<keyword id="KW-0157">Chromophore</keyword>
<keyword id="KW-1015">Disulfide bond</keyword>
<keyword id="KW-0297">G-protein coupled receptor</keyword>
<keyword id="KW-0325">Glycoprotein</keyword>
<keyword id="KW-0449">Lipoprotein</keyword>
<keyword id="KW-0472">Membrane</keyword>
<keyword id="KW-0479">Metal-binding</keyword>
<keyword id="KW-0564">Palmitate</keyword>
<keyword id="KW-0597">Phosphoprotein</keyword>
<keyword id="KW-0600">Photoreceptor protein</keyword>
<keyword id="KW-0675">Receptor</keyword>
<keyword id="KW-0681">Retinal protein</keyword>
<keyword id="KW-0716">Sensory transduction</keyword>
<keyword id="KW-0807">Transducer</keyword>
<keyword id="KW-0812">Transmembrane</keyword>
<keyword id="KW-1133">Transmembrane helix</keyword>
<keyword id="KW-0844">Vision</keyword>
<keyword id="KW-0862">Zinc</keyword>
<gene>
    <name type="primary">RHO</name>
</gene>
<organism>
    <name type="scientific">Phoca vitulina</name>
    <name type="common">Harbor seal</name>
    <dbReference type="NCBI Taxonomy" id="9720"/>
    <lineage>
        <taxon>Eukaryota</taxon>
        <taxon>Metazoa</taxon>
        <taxon>Chordata</taxon>
        <taxon>Craniata</taxon>
        <taxon>Vertebrata</taxon>
        <taxon>Euteleostomi</taxon>
        <taxon>Mammalia</taxon>
        <taxon>Eutheria</taxon>
        <taxon>Laurasiatheria</taxon>
        <taxon>Carnivora</taxon>
        <taxon>Caniformia</taxon>
        <taxon>Pinnipedia</taxon>
        <taxon>Phocidae</taxon>
        <taxon>Phocinae</taxon>
        <taxon>Phoca</taxon>
    </lineage>
</organism>
<accession>O62794</accession>
<sequence>MNGTEGPNFYVPFSNKTGVVRSPFEFPQYYLAEPWQFSMLAAYMFLLIVLGFPINFLTLYVTVQHKKLRTPLNYILLNLAVADLFMVFGGFTTTLYTSLHGYFVFGPTGCNLEGFFATLGGEIALWSLVVLAIERYVVVCKPMSNFRFGENHAIMGVGFTWVMALACAAPPLVGWSRYIPEGMQCSCGIDYYTLKPEVNNESFVIYMFVVHFTIPMIVIFFCYGQLVFTVKEAAAQQQESATTQKAEKEVTRMVIIMVIAFLICWVPYASVAFYIFTHQGSNFGPIFMTLPAFFAKAASIYNPVIYIMMNKQFRTCMITTLCCGKNPLGDDEVSASASKTETSQVAPA</sequence>
<comment type="function">
    <text evidence="1 3">Photoreceptor required for image-forming vision at low light intensity. Required for photoreceptor cell viability after birth (By similarity). Light-induced isomerization of 11-cis to all-trans retinal triggers a conformational change that activates signaling via G-proteins. Subsequent receptor phosphorylation mediates displacement of the bound G-protein alpha subunit by the arrestin SAG and terminates signaling (By similarity).</text>
</comment>
<comment type="subunit">
    <text evidence="1 3 4">Homodimer. May form a complex composed of RHO, GRK1 and RCVRN in a Ca(2+)-dependent manner; RCVRN prevents the interaction between GRK1 and RHO (By similarity). Interacts with GRK1 (By similarity). Interacts (phosphorylated form) with SAG (By similarity). Interacts with GNAT1 (By similarity). Interacts with GNAT3. SAG and G-proteins compete for a common binding site (By similarity). Interacts with PRCD; the interaction promotes PRCD stability (By similarity). Forms a complex with ASAP1 and ARF4. Forms a complex with ASAP1, RAB11A, Rabin8/RAB3IP, ARF4 and RAB11FIP3; the complex regulates Golgi-to-cilia rhodopsin/RHO transport in photoreceptors (By similarity).</text>
</comment>
<comment type="subcellular location">
    <subcellularLocation>
        <location evidence="1">Membrane</location>
        <topology evidence="1">Multi-pass membrane protein</topology>
    </subcellularLocation>
    <subcellularLocation>
        <location evidence="1">Cell projection</location>
        <location evidence="1">Cilium</location>
        <location evidence="1">Photoreceptor outer segment</location>
    </subcellularLocation>
    <text evidence="3">Synthesized in the inner segment (IS) of rod photoreceptor cells before vectorial transport to disk membranes in the rod outer segment (OS) photosensory cilia.</text>
</comment>
<comment type="PTM">
    <text evidence="1">Phosphorylated on some or all of the serine and threonine residues present in the C-terminal region.</text>
</comment>
<comment type="PTM">
    <text evidence="1">Contains one covalently linked retinal chromophore. Upon light absorption, the covalently bound 11-cis-retinal is converted to all-trans-retinal. After hydrolysis of the Schiff base and release of the covalently bound all-trans-retinal, active rhodopsin is regenerated by binding of a fresh molecule of 11-cis-retinal.</text>
</comment>
<comment type="similarity">
    <text evidence="6">Belongs to the G-protein coupled receptor 1 family. Opsin subfamily.</text>
</comment>
<reference key="1">
    <citation type="submission" date="1998-03" db="EMBL/GenBank/DDBJ databases">
        <authorList>
            <person name="Fasick J.I."/>
            <person name="Robinson P.R."/>
        </authorList>
    </citation>
    <scope>NUCLEOTIDE SEQUENCE [MRNA]</scope>
</reference>
<proteinExistence type="evidence at transcript level"/>
<evidence type="ECO:0000250" key="1">
    <source>
        <dbReference type="UniProtKB" id="P02699"/>
    </source>
</evidence>
<evidence type="ECO:0000250" key="2">
    <source>
        <dbReference type="UniProtKB" id="P02700"/>
    </source>
</evidence>
<evidence type="ECO:0000250" key="3">
    <source>
        <dbReference type="UniProtKB" id="P08100"/>
    </source>
</evidence>
<evidence type="ECO:0000250" key="4">
    <source>
        <dbReference type="UniProtKB" id="P15409"/>
    </source>
</evidence>
<evidence type="ECO:0000255" key="5"/>
<evidence type="ECO:0000255" key="6">
    <source>
        <dbReference type="PROSITE-ProRule" id="PRU00521"/>
    </source>
</evidence>
<evidence type="ECO:0000305" key="7"/>
<name>OPSD_PHOVI</name>
<protein>
    <recommendedName>
        <fullName>Rhodopsin</fullName>
    </recommendedName>
</protein>
<feature type="chain" id="PRO_0000197698" description="Rhodopsin">
    <location>
        <begin position="1"/>
        <end position="348"/>
    </location>
</feature>
<feature type="topological domain" description="Extracellular" evidence="7">
    <location>
        <begin position="1"/>
        <end position="36"/>
    </location>
</feature>
<feature type="transmembrane region" description="Helical; Name=1" evidence="1">
    <location>
        <begin position="37"/>
        <end position="61"/>
    </location>
</feature>
<feature type="topological domain" description="Cytoplasmic" evidence="7">
    <location>
        <begin position="62"/>
        <end position="73"/>
    </location>
</feature>
<feature type="transmembrane region" description="Helical; Name=2" evidence="1">
    <location>
        <begin position="74"/>
        <end position="96"/>
    </location>
</feature>
<feature type="topological domain" description="Extracellular" evidence="7">
    <location>
        <begin position="97"/>
        <end position="110"/>
    </location>
</feature>
<feature type="transmembrane region" description="Helical; Name=3" evidence="1">
    <location>
        <begin position="111"/>
        <end position="133"/>
    </location>
</feature>
<feature type="topological domain" description="Cytoplasmic" evidence="7">
    <location>
        <begin position="134"/>
        <end position="152"/>
    </location>
</feature>
<feature type="transmembrane region" description="Helical; Name=4" evidence="1">
    <location>
        <begin position="153"/>
        <end position="173"/>
    </location>
</feature>
<feature type="topological domain" description="Extracellular" evidence="7">
    <location>
        <begin position="174"/>
        <end position="202"/>
    </location>
</feature>
<feature type="transmembrane region" description="Helical; Name=5" evidence="1">
    <location>
        <begin position="203"/>
        <end position="224"/>
    </location>
</feature>
<feature type="topological domain" description="Cytoplasmic" evidence="7">
    <location>
        <begin position="225"/>
        <end position="252"/>
    </location>
</feature>
<feature type="transmembrane region" description="Helical; Name=6" evidence="1">
    <location>
        <begin position="253"/>
        <end position="274"/>
    </location>
</feature>
<feature type="topological domain" description="Extracellular" evidence="7">
    <location>
        <begin position="275"/>
        <end position="286"/>
    </location>
</feature>
<feature type="transmembrane region" description="Helical; Name=7" evidence="1">
    <location>
        <begin position="287"/>
        <end position="308"/>
    </location>
</feature>
<feature type="topological domain" description="Cytoplasmic" evidence="7">
    <location>
        <begin position="309"/>
        <end position="348"/>
    </location>
</feature>
<feature type="region of interest" description="Interaction with SAG" evidence="1">
    <location>
        <begin position="330"/>
        <end position="348"/>
    </location>
</feature>
<feature type="short sequence motif" description="'Ionic lock' involved in activated form stabilization" evidence="1">
    <location>
        <begin position="134"/>
        <end position="136"/>
    </location>
</feature>
<feature type="binding site" evidence="1">
    <location>
        <position position="201"/>
    </location>
    <ligand>
        <name>Zn(2+)</name>
        <dbReference type="ChEBI" id="CHEBI:29105"/>
    </ligand>
</feature>
<feature type="binding site" evidence="1">
    <location>
        <position position="279"/>
    </location>
    <ligand>
        <name>Zn(2+)</name>
        <dbReference type="ChEBI" id="CHEBI:29105"/>
    </ligand>
</feature>
<feature type="site" description="Plays an important role in the conformation switch to the active conformation" evidence="1">
    <location>
        <position position="113"/>
    </location>
</feature>
<feature type="modified residue" description="N-acetylmethionine" evidence="1">
    <location>
        <position position="1"/>
    </location>
</feature>
<feature type="modified residue" description="N6-(retinylidene)lysine" evidence="1">
    <location>
        <position position="296"/>
    </location>
</feature>
<feature type="modified residue" description="Phosphoserine" evidence="2">
    <location>
        <position position="334"/>
    </location>
</feature>
<feature type="modified residue" description="Phosphoserine" evidence="2">
    <location>
        <position position="338"/>
    </location>
</feature>
<feature type="modified residue" description="Phosphothreonine" evidence="1">
    <location>
        <position position="340"/>
    </location>
</feature>
<feature type="modified residue" description="Phosphothreonine" evidence="1">
    <location>
        <position position="342"/>
    </location>
</feature>
<feature type="modified residue" description="Phosphoserine" evidence="1">
    <location>
        <position position="343"/>
    </location>
</feature>
<feature type="lipid moiety-binding region" description="S-palmitoyl cysteine" evidence="1">
    <location>
        <position position="322"/>
    </location>
</feature>
<feature type="lipid moiety-binding region" description="S-palmitoyl cysteine" evidence="1">
    <location>
        <position position="323"/>
    </location>
</feature>
<feature type="glycosylation site" description="N-linked (GlcNAc...) asparagine" evidence="5">
    <location>
        <position position="2"/>
    </location>
</feature>
<feature type="glycosylation site" description="N-linked (GlcNAc...) asparagine" evidence="5">
    <location>
        <position position="15"/>
    </location>
</feature>
<feature type="disulfide bond" evidence="6">
    <location>
        <begin position="110"/>
        <end position="187"/>
    </location>
</feature>
<dbReference type="EMBL" id="AF055317">
    <property type="protein sequence ID" value="AAC12764.1"/>
    <property type="molecule type" value="mRNA"/>
</dbReference>
<dbReference type="RefSeq" id="XP_032268123.1">
    <property type="nucleotide sequence ID" value="XM_032412232.1"/>
</dbReference>
<dbReference type="BMRB" id="O62794"/>
<dbReference type="SMR" id="O62794"/>
<dbReference type="GlyCosmos" id="O62794">
    <property type="glycosylation" value="2 sites, No reported glycans"/>
</dbReference>
<dbReference type="GeneID" id="116637038"/>
<dbReference type="GO" id="GO:0016020">
    <property type="term" value="C:membrane"/>
    <property type="evidence" value="ECO:0000250"/>
    <property type="project" value="UniProtKB"/>
</dbReference>
<dbReference type="GO" id="GO:0097381">
    <property type="term" value="C:photoreceptor disc membrane"/>
    <property type="evidence" value="ECO:0000250"/>
    <property type="project" value="UniProtKB"/>
</dbReference>
<dbReference type="GO" id="GO:0060342">
    <property type="term" value="C:photoreceptor inner segment membrane"/>
    <property type="evidence" value="ECO:0000250"/>
    <property type="project" value="UniProtKB"/>
</dbReference>
<dbReference type="GO" id="GO:0042622">
    <property type="term" value="C:photoreceptor outer segment membrane"/>
    <property type="evidence" value="ECO:0000250"/>
    <property type="project" value="UniProtKB"/>
</dbReference>
<dbReference type="GO" id="GO:0005886">
    <property type="term" value="C:plasma membrane"/>
    <property type="evidence" value="ECO:0000250"/>
    <property type="project" value="UniProtKB"/>
</dbReference>
<dbReference type="GO" id="GO:0005502">
    <property type="term" value="F:11-cis retinal binding"/>
    <property type="evidence" value="ECO:0000250"/>
    <property type="project" value="UniProtKB"/>
</dbReference>
<dbReference type="GO" id="GO:0008020">
    <property type="term" value="F:G protein-coupled photoreceptor activity"/>
    <property type="evidence" value="ECO:0000250"/>
    <property type="project" value="UniProtKB"/>
</dbReference>
<dbReference type="GO" id="GO:0046872">
    <property type="term" value="F:metal ion binding"/>
    <property type="evidence" value="ECO:0007669"/>
    <property type="project" value="UniProtKB-KW"/>
</dbReference>
<dbReference type="GO" id="GO:0016038">
    <property type="term" value="P:absorption of visible light"/>
    <property type="evidence" value="ECO:0000250"/>
    <property type="project" value="AgBase"/>
</dbReference>
<dbReference type="GO" id="GO:0016056">
    <property type="term" value="P:G protein-coupled opsin signaling pathway"/>
    <property type="evidence" value="ECO:0000250"/>
    <property type="project" value="UniProtKB"/>
</dbReference>
<dbReference type="GO" id="GO:0007601">
    <property type="term" value="P:visual perception"/>
    <property type="evidence" value="ECO:0007669"/>
    <property type="project" value="UniProtKB-KW"/>
</dbReference>
<dbReference type="CDD" id="cd15080">
    <property type="entry name" value="7tmA_MWS_opsin"/>
    <property type="match status" value="1"/>
</dbReference>
<dbReference type="FunFam" id="1.20.1070.10:FF:000018">
    <property type="entry name" value="Rhodopsin"/>
    <property type="match status" value="1"/>
</dbReference>
<dbReference type="Gene3D" id="1.20.1070.10">
    <property type="entry name" value="Rhodopsin 7-helix transmembrane proteins"/>
    <property type="match status" value="1"/>
</dbReference>
<dbReference type="InterPro" id="IPR050125">
    <property type="entry name" value="GPCR_opsins"/>
</dbReference>
<dbReference type="InterPro" id="IPR000276">
    <property type="entry name" value="GPCR_Rhodpsn"/>
</dbReference>
<dbReference type="InterPro" id="IPR017452">
    <property type="entry name" value="GPCR_Rhodpsn_7TM"/>
</dbReference>
<dbReference type="InterPro" id="IPR001760">
    <property type="entry name" value="Opsin"/>
</dbReference>
<dbReference type="InterPro" id="IPR027430">
    <property type="entry name" value="Retinal_BS"/>
</dbReference>
<dbReference type="InterPro" id="IPR000732">
    <property type="entry name" value="Rhodopsin"/>
</dbReference>
<dbReference type="InterPro" id="IPR019477">
    <property type="entry name" value="Rhodopsin_N"/>
</dbReference>
<dbReference type="PANTHER" id="PTHR24240">
    <property type="entry name" value="OPSIN"/>
    <property type="match status" value="1"/>
</dbReference>
<dbReference type="Pfam" id="PF00001">
    <property type="entry name" value="7tm_1"/>
    <property type="match status" value="1"/>
</dbReference>
<dbReference type="Pfam" id="PF10413">
    <property type="entry name" value="Rhodopsin_N"/>
    <property type="match status" value="1"/>
</dbReference>
<dbReference type="PRINTS" id="PR00237">
    <property type="entry name" value="GPCRRHODOPSN"/>
</dbReference>
<dbReference type="PRINTS" id="PR00238">
    <property type="entry name" value="OPSIN"/>
</dbReference>
<dbReference type="PRINTS" id="PR00579">
    <property type="entry name" value="RHODOPSIN"/>
</dbReference>
<dbReference type="SUPFAM" id="SSF81321">
    <property type="entry name" value="Family A G protein-coupled receptor-like"/>
    <property type="match status" value="1"/>
</dbReference>
<dbReference type="PROSITE" id="PS00237">
    <property type="entry name" value="G_PROTEIN_RECEP_F1_1"/>
    <property type="match status" value="1"/>
</dbReference>
<dbReference type="PROSITE" id="PS50262">
    <property type="entry name" value="G_PROTEIN_RECEP_F1_2"/>
    <property type="match status" value="1"/>
</dbReference>
<dbReference type="PROSITE" id="PS00238">
    <property type="entry name" value="OPSIN"/>
    <property type="match status" value="1"/>
</dbReference>